<keyword id="KW-0010">Activator</keyword>
<keyword id="KW-0238">DNA-binding</keyword>
<keyword id="KW-0936">Ethylene signaling pathway</keyword>
<keyword id="KW-0539">Nucleus</keyword>
<keyword id="KW-1185">Reference proteome</keyword>
<keyword id="KW-0804">Transcription</keyword>
<keyword id="KW-0805">Transcription regulation</keyword>
<protein>
    <recommendedName>
        <fullName>Ethylene-responsive transcription factor ERF095</fullName>
    </recommendedName>
</protein>
<organism>
    <name type="scientific">Arabidopsis thaliana</name>
    <name type="common">Mouse-ear cress</name>
    <dbReference type="NCBI Taxonomy" id="3702"/>
    <lineage>
        <taxon>Eukaryota</taxon>
        <taxon>Viridiplantae</taxon>
        <taxon>Streptophyta</taxon>
        <taxon>Embryophyta</taxon>
        <taxon>Tracheophyta</taxon>
        <taxon>Spermatophyta</taxon>
        <taxon>Magnoliopsida</taxon>
        <taxon>eudicotyledons</taxon>
        <taxon>Gunneridae</taxon>
        <taxon>Pentapetalae</taxon>
        <taxon>rosids</taxon>
        <taxon>malvids</taxon>
        <taxon>Brassicales</taxon>
        <taxon>Brassicaceae</taxon>
        <taxon>Camelineae</taxon>
        <taxon>Arabidopsis</taxon>
    </lineage>
</organism>
<feature type="chain" id="PRO_0000290414" description="Ethylene-responsive transcription factor ERF095">
    <location>
        <begin position="1"/>
        <end position="139"/>
    </location>
</feature>
<feature type="DNA-binding region" description="AP2/ERF" evidence="2">
    <location>
        <begin position="13"/>
        <end position="71"/>
    </location>
</feature>
<feature type="region of interest" description="Disordered" evidence="3">
    <location>
        <begin position="77"/>
        <end position="103"/>
    </location>
</feature>
<gene>
    <name type="primary">ERF095</name>
    <name type="ordered locus">At3g23220</name>
    <name type="ORF">K14B15.13</name>
</gene>
<comment type="function">
    <text evidence="1">Probably acts as a transcriptional activator. Binds to the GCC-box pathogenesis-related promoter element. May be involved in the regulation of gene expression by stress factors and by components of stress signal transduction pathways (By similarity).</text>
</comment>
<comment type="subunit">
    <text evidence="4">Interacts with MED25.</text>
</comment>
<comment type="subcellular location">
    <subcellularLocation>
        <location evidence="5">Nucleus</location>
    </subcellularLocation>
</comment>
<comment type="similarity">
    <text evidence="5">Belongs to the AP2/ERF transcription factor family. ERF subfamily.</text>
</comment>
<evidence type="ECO:0000250" key="1"/>
<evidence type="ECO:0000255" key="2">
    <source>
        <dbReference type="PROSITE-ProRule" id="PRU00366"/>
    </source>
</evidence>
<evidence type="ECO:0000256" key="3">
    <source>
        <dbReference type="SAM" id="MobiDB-lite"/>
    </source>
</evidence>
<evidence type="ECO:0000269" key="4">
    <source>
    </source>
</evidence>
<evidence type="ECO:0000305" key="5"/>
<name>ERF95_ARATH</name>
<dbReference type="EMBL" id="AY974196">
    <property type="protein sequence ID" value="AAX89122.1"/>
    <property type="molecule type" value="mRNA"/>
</dbReference>
<dbReference type="EMBL" id="AB025608">
    <property type="protein sequence ID" value="BAA95735.1"/>
    <property type="molecule type" value="Genomic_DNA"/>
</dbReference>
<dbReference type="EMBL" id="CP002686">
    <property type="protein sequence ID" value="AEE76736.1"/>
    <property type="molecule type" value="Genomic_DNA"/>
</dbReference>
<dbReference type="EMBL" id="AY560847">
    <property type="protein sequence ID" value="AAT44914.1"/>
    <property type="molecule type" value="mRNA"/>
</dbReference>
<dbReference type="EMBL" id="BT028890">
    <property type="protein sequence ID" value="ABI49437.1"/>
    <property type="molecule type" value="mRNA"/>
</dbReference>
<dbReference type="SMR" id="Q9LTC6"/>
<dbReference type="BioGRID" id="7232">
    <property type="interactions" value="6"/>
</dbReference>
<dbReference type="FunCoup" id="Q9LTC6">
    <property type="interactions" value="23"/>
</dbReference>
<dbReference type="IntAct" id="Q9LTC6">
    <property type="interactions" value="5"/>
</dbReference>
<dbReference type="STRING" id="3702.Q9LTC6"/>
<dbReference type="PaxDb" id="3702-AT3G23220.1"/>
<dbReference type="EnsemblPlants" id="AT3G23220.1">
    <property type="protein sequence ID" value="AT3G23220.1"/>
    <property type="gene ID" value="AT3G23220"/>
</dbReference>
<dbReference type="Gramene" id="AT3G23220.1">
    <property type="protein sequence ID" value="AT3G23220.1"/>
    <property type="gene ID" value="AT3G23220"/>
</dbReference>
<dbReference type="KEGG" id="ath:AT3G23220"/>
<dbReference type="Araport" id="AT3G23220"/>
<dbReference type="TAIR" id="AT3G23220">
    <property type="gene designation" value="ESE1"/>
</dbReference>
<dbReference type="eggNOG" id="ENOG502S124">
    <property type="taxonomic scope" value="Eukaryota"/>
</dbReference>
<dbReference type="HOGENOM" id="CLU_058713_5_0_1"/>
<dbReference type="InParanoid" id="Q9LTC6"/>
<dbReference type="OMA" id="DNCNDAN"/>
<dbReference type="PhylomeDB" id="Q9LTC6"/>
<dbReference type="PRO" id="PR:Q9LTC6"/>
<dbReference type="Proteomes" id="UP000006548">
    <property type="component" value="Chromosome 3"/>
</dbReference>
<dbReference type="ExpressionAtlas" id="Q9LTC6">
    <property type="expression patterns" value="baseline and differential"/>
</dbReference>
<dbReference type="GO" id="GO:0005634">
    <property type="term" value="C:nucleus"/>
    <property type="evidence" value="ECO:0000304"/>
    <property type="project" value="TAIR"/>
</dbReference>
<dbReference type="GO" id="GO:0003700">
    <property type="term" value="F:DNA-binding transcription factor activity"/>
    <property type="evidence" value="ECO:0000250"/>
    <property type="project" value="TAIR"/>
</dbReference>
<dbReference type="GO" id="GO:0000976">
    <property type="term" value="F:transcription cis-regulatory region binding"/>
    <property type="evidence" value="ECO:0000353"/>
    <property type="project" value="TAIR"/>
</dbReference>
<dbReference type="GO" id="GO:0009873">
    <property type="term" value="P:ethylene-activated signaling pathway"/>
    <property type="evidence" value="ECO:0000304"/>
    <property type="project" value="TAIR"/>
</dbReference>
<dbReference type="CDD" id="cd00018">
    <property type="entry name" value="AP2"/>
    <property type="match status" value="1"/>
</dbReference>
<dbReference type="FunFam" id="3.30.730.10:FF:000001">
    <property type="entry name" value="Ethylene-responsive transcription factor 2"/>
    <property type="match status" value="1"/>
</dbReference>
<dbReference type="Gene3D" id="3.30.730.10">
    <property type="entry name" value="AP2/ERF domain"/>
    <property type="match status" value="1"/>
</dbReference>
<dbReference type="InterPro" id="IPR001471">
    <property type="entry name" value="AP2/ERF_dom"/>
</dbReference>
<dbReference type="InterPro" id="IPR036955">
    <property type="entry name" value="AP2/ERF_dom_sf"/>
</dbReference>
<dbReference type="InterPro" id="IPR016177">
    <property type="entry name" value="DNA-bd_dom_sf"/>
</dbReference>
<dbReference type="InterPro" id="IPR044808">
    <property type="entry name" value="ERF_plant"/>
</dbReference>
<dbReference type="PANTHER" id="PTHR31190">
    <property type="entry name" value="DNA-BINDING DOMAIN"/>
    <property type="match status" value="1"/>
</dbReference>
<dbReference type="PANTHER" id="PTHR31190:SF431">
    <property type="entry name" value="ETHYLENE-RESPONSIVE TRANSCRIPTION FACTOR ERF095"/>
    <property type="match status" value="1"/>
</dbReference>
<dbReference type="Pfam" id="PF00847">
    <property type="entry name" value="AP2"/>
    <property type="match status" value="1"/>
</dbReference>
<dbReference type="PRINTS" id="PR00367">
    <property type="entry name" value="ETHRSPELEMNT"/>
</dbReference>
<dbReference type="SMART" id="SM00380">
    <property type="entry name" value="AP2"/>
    <property type="match status" value="1"/>
</dbReference>
<dbReference type="SUPFAM" id="SSF54171">
    <property type="entry name" value="DNA-binding domain"/>
    <property type="match status" value="1"/>
</dbReference>
<dbReference type="PROSITE" id="PS51032">
    <property type="entry name" value="AP2_ERF"/>
    <property type="match status" value="1"/>
</dbReference>
<reference key="1">
    <citation type="journal article" date="2005" name="Plant Mol. Biol.">
        <title>An annotation update via cDNA sequence analysis and comprehensive profiling of developmental, hormonal or environmental responsiveness of the Arabidopsis AP2/EREBP transcription factor gene family.</title>
        <authorList>
            <person name="Feng J.-X."/>
            <person name="Liu D."/>
            <person name="Pan Y."/>
            <person name="Gong W."/>
            <person name="Ma L.-G."/>
            <person name="Luo J.-C."/>
            <person name="Deng X.-W."/>
            <person name="Zhu Y.-X."/>
        </authorList>
    </citation>
    <scope>NUCLEOTIDE SEQUENCE [MRNA]</scope>
    <source>
        <strain>cv. Columbia</strain>
    </source>
</reference>
<reference key="2">
    <citation type="journal article" date="2000" name="DNA Res.">
        <title>Structural analysis of Arabidopsis thaliana chromosome 3. I. Sequence features of the regions of 4,504,864 bp covered by sixty P1 and TAC clones.</title>
        <authorList>
            <person name="Sato S."/>
            <person name="Nakamura Y."/>
            <person name="Kaneko T."/>
            <person name="Katoh T."/>
            <person name="Asamizu E."/>
            <person name="Tabata S."/>
        </authorList>
    </citation>
    <scope>NUCLEOTIDE SEQUENCE [LARGE SCALE GENOMIC DNA]</scope>
    <source>
        <strain>cv. Columbia</strain>
    </source>
</reference>
<reference key="3">
    <citation type="journal article" date="2017" name="Plant J.">
        <title>Araport11: a complete reannotation of the Arabidopsis thaliana reference genome.</title>
        <authorList>
            <person name="Cheng C.Y."/>
            <person name="Krishnakumar V."/>
            <person name="Chan A.P."/>
            <person name="Thibaud-Nissen F."/>
            <person name="Schobel S."/>
            <person name="Town C.D."/>
        </authorList>
    </citation>
    <scope>GENOME REANNOTATION</scope>
    <source>
        <strain>cv. Columbia</strain>
    </source>
</reference>
<reference key="4">
    <citation type="submission" date="2004-02" db="EMBL/GenBank/DDBJ databases">
        <title>Molecular cloning, expression, phylogenetic and functional characterization of the Arabidopsis AP2/EREBP transcription factor family.</title>
        <authorList>
            <person name="Pan Y."/>
            <person name="Gong W."/>
            <person name="Liu D."/>
            <person name="Fu Q."/>
            <person name="Mei W.-Q."/>
            <person name="Song W.-Q."/>
            <person name="Ma L.-G."/>
            <person name="Luo J.-C."/>
            <person name="Deng X.-W."/>
            <person name="Zhu Y.-X."/>
        </authorList>
    </citation>
    <scope>NUCLEOTIDE SEQUENCE [MRNA] OF 12-139</scope>
</reference>
<reference key="5">
    <citation type="submission" date="2006-09" db="EMBL/GenBank/DDBJ databases">
        <title>Arabidopsis ORF clones.</title>
        <authorList>
            <person name="Bautista V.R."/>
            <person name="Kim C.J."/>
            <person name="Chen H."/>
            <person name="Quinitio C."/>
            <person name="Ecker J.R."/>
        </authorList>
    </citation>
    <scope>NUCLEOTIDE SEQUENCE [LARGE SCALE MRNA] OF 12-139</scope>
    <source>
        <strain>cv. Columbia</strain>
    </source>
</reference>
<reference key="6">
    <citation type="journal article" date="2006" name="Plant Physiol.">
        <title>Genome-wide analysis of the ERF gene family in Arabidopsis and rice.</title>
        <authorList>
            <person name="Nakano T."/>
            <person name="Suzuki K."/>
            <person name="Fujimura T."/>
            <person name="Shinshi H."/>
        </authorList>
    </citation>
    <scope>GENE FAMILY</scope>
    <scope>NOMENCLATURE</scope>
</reference>
<reference key="7">
    <citation type="journal article" date="2011" name="Mol. Plant">
        <title>A high-throughput screening system for Arabidopsis transcription factors and its application to Med25-dependent transcriptional regulation.</title>
        <authorList>
            <person name="Ou B."/>
            <person name="Yin K.Q."/>
            <person name="Liu S.N."/>
            <person name="Yang Y."/>
            <person name="Gu T."/>
            <person name="Wing Hui J.M."/>
            <person name="Zhang L."/>
            <person name="Miao J."/>
            <person name="Kondou Y."/>
            <person name="Matsui M."/>
            <person name="Gu H.Y."/>
            <person name="Qu L.J."/>
        </authorList>
    </citation>
    <scope>INTERACTION WITH MED25</scope>
</reference>
<proteinExistence type="evidence at protein level"/>
<sequence>MERIESYNTNEMKYRGVRKRPWGKYAAEIRDSARHGARVWLGTFNTAEDAARAYDRAAFGMRGQRAILNFPHEYQMMKDGPNGSHENAVASSSSGYRGGGGGDDGREVIEFEYLDDSLLEELLDYGERSNQDNCNDANR</sequence>
<accession>Q9LTC6</accession>
<accession>Q6J9S8</accession>